<dbReference type="EMBL" id="CP001050">
    <property type="protein sequence ID" value="ACF29698.1"/>
    <property type="molecule type" value="Genomic_DNA"/>
</dbReference>
<dbReference type="RefSeq" id="WP_003691180.1">
    <property type="nucleotide sequence ID" value="NC_011035.1"/>
</dbReference>
<dbReference type="SMR" id="B4RLL1"/>
<dbReference type="KEGG" id="ngk:NGK_1021"/>
<dbReference type="HOGENOM" id="CLU_161438_1_2_4"/>
<dbReference type="Proteomes" id="UP000002564">
    <property type="component" value="Chromosome"/>
</dbReference>
<dbReference type="Gene3D" id="3.30.70.260">
    <property type="match status" value="1"/>
</dbReference>
<dbReference type="HAMAP" id="MF_00659">
    <property type="entry name" value="UPF0250"/>
    <property type="match status" value="1"/>
</dbReference>
<dbReference type="InterPro" id="IPR007454">
    <property type="entry name" value="UPF0250_YbeD-like"/>
</dbReference>
<dbReference type="InterPro" id="IPR027471">
    <property type="entry name" value="YbeD-like_sf"/>
</dbReference>
<dbReference type="PANTHER" id="PTHR38036">
    <property type="entry name" value="UPF0250 PROTEIN YBED"/>
    <property type="match status" value="1"/>
</dbReference>
<dbReference type="PANTHER" id="PTHR38036:SF1">
    <property type="entry name" value="UPF0250 PROTEIN YBED"/>
    <property type="match status" value="1"/>
</dbReference>
<dbReference type="Pfam" id="PF04359">
    <property type="entry name" value="DUF493"/>
    <property type="match status" value="1"/>
</dbReference>
<dbReference type="SUPFAM" id="SSF117991">
    <property type="entry name" value="YbeD/HP0495-like"/>
    <property type="match status" value="1"/>
</dbReference>
<reference key="1">
    <citation type="journal article" date="2008" name="J. Bacteriol.">
        <title>Complete genome sequence of Neisseria gonorrhoeae NCCP11945.</title>
        <authorList>
            <person name="Chung G.T."/>
            <person name="Yoo J.S."/>
            <person name="Oh H.B."/>
            <person name="Lee Y.S."/>
            <person name="Cha S.H."/>
            <person name="Kim S.J."/>
            <person name="Yoo C.K."/>
        </authorList>
    </citation>
    <scope>NUCLEOTIDE SEQUENCE [LARGE SCALE GENOMIC DNA]</scope>
    <source>
        <strain>NCCP11945</strain>
    </source>
</reference>
<sequence>MTEQKNKASLIEFPCAFPLKVMGAVHPEFEQAVLDTVRLHAPDTQAHHITTRPSSKGNYTGATVQVKVENQEQLDNIYRALTSHELVKVVL</sequence>
<feature type="chain" id="PRO_1000131250" description="UPF0250 protein NGK_1021">
    <location>
        <begin position="1"/>
        <end position="91"/>
    </location>
</feature>
<accession>B4RLL1</accession>
<evidence type="ECO:0000255" key="1">
    <source>
        <dbReference type="HAMAP-Rule" id="MF_00659"/>
    </source>
</evidence>
<protein>
    <recommendedName>
        <fullName evidence="1">UPF0250 protein NGK_1021</fullName>
    </recommendedName>
</protein>
<gene>
    <name type="ordered locus">NGK_1021</name>
</gene>
<comment type="similarity">
    <text evidence="1">Belongs to the UPF0250 family.</text>
</comment>
<name>Y1021_NEIG2</name>
<organism>
    <name type="scientific">Neisseria gonorrhoeae (strain NCCP11945)</name>
    <dbReference type="NCBI Taxonomy" id="521006"/>
    <lineage>
        <taxon>Bacteria</taxon>
        <taxon>Pseudomonadati</taxon>
        <taxon>Pseudomonadota</taxon>
        <taxon>Betaproteobacteria</taxon>
        <taxon>Neisseriales</taxon>
        <taxon>Neisseriaceae</taxon>
        <taxon>Neisseria</taxon>
    </lineage>
</organism>
<proteinExistence type="inferred from homology"/>